<accession>Q9PQP8</accession>
<reference key="1">
    <citation type="journal article" date="2000" name="Nature">
        <title>The complete sequence of the mucosal pathogen Ureaplasma urealyticum.</title>
        <authorList>
            <person name="Glass J.I."/>
            <person name="Lefkowitz E.J."/>
            <person name="Glass J.S."/>
            <person name="Heiner C.R."/>
            <person name="Chen E.Y."/>
            <person name="Cassell G.H."/>
        </authorList>
    </citation>
    <scope>NUCLEOTIDE SEQUENCE [LARGE SCALE GENOMIC DNA]</scope>
    <source>
        <strain>ATCC 700970</strain>
    </source>
</reference>
<comment type="function">
    <text evidence="1">This is one of the proteins that bind and probably mediate the attachment of the 5S RNA into the large ribosomal subunit, where it forms part of the central protuberance. In the 70S ribosome it contacts protein S13 of the 30S subunit (bridge B1b), connecting the 2 subunits; this bridge is implicated in subunit movement. Contacts the P site tRNA; the 5S rRNA and some of its associated proteins might help stabilize positioning of ribosome-bound tRNAs.</text>
</comment>
<comment type="subunit">
    <text evidence="1">Part of the 50S ribosomal subunit; part of the 5S rRNA/L5/L18/L25 subcomplex. Contacts the 5S rRNA and the P site tRNA. Forms a bridge to the 30S subunit in the 70S ribosome.</text>
</comment>
<comment type="similarity">
    <text evidence="1">Belongs to the universal ribosomal protein uL5 family.</text>
</comment>
<feature type="chain" id="PRO_0000125021" description="Large ribosomal subunit protein uL5">
    <location>
        <begin position="1"/>
        <end position="184"/>
    </location>
</feature>
<evidence type="ECO:0000255" key="1">
    <source>
        <dbReference type="HAMAP-Rule" id="MF_01333"/>
    </source>
</evidence>
<evidence type="ECO:0000305" key="2"/>
<sequence length="184" mass="20339">MAFLKDLYKNKVAKDLQKEFAYSSVMQIPKIEKVVINAGIGNAVADKKHLEAAISELTLITGQRPVETKAKKSIATFKLRAGQSIGAKVTLRGDRMWAFIETLFNIALPRVRDFKGISNNSFDNQGNYTLGIKEQIIFPQVVYDDVKSVRGFDVTFVTTAKTAQEAKALLVGLGAPFQKVRGDK</sequence>
<keyword id="KW-1185">Reference proteome</keyword>
<keyword id="KW-0687">Ribonucleoprotein</keyword>
<keyword id="KW-0689">Ribosomal protein</keyword>
<keyword id="KW-0694">RNA-binding</keyword>
<keyword id="KW-0699">rRNA-binding</keyword>
<keyword id="KW-0820">tRNA-binding</keyword>
<name>RL5_UREPA</name>
<organism>
    <name type="scientific">Ureaplasma parvum serovar 3 (strain ATCC 700970)</name>
    <dbReference type="NCBI Taxonomy" id="273119"/>
    <lineage>
        <taxon>Bacteria</taxon>
        <taxon>Bacillati</taxon>
        <taxon>Mycoplasmatota</taxon>
        <taxon>Mycoplasmoidales</taxon>
        <taxon>Mycoplasmoidaceae</taxon>
        <taxon>Ureaplasma</taxon>
    </lineage>
</organism>
<gene>
    <name evidence="1" type="primary">rplE</name>
    <name evidence="1" type="synonym">rpl5</name>
    <name type="ordered locus">UU243</name>
</gene>
<dbReference type="EMBL" id="AF222894">
    <property type="protein sequence ID" value="AAF30652.1"/>
    <property type="molecule type" value="Genomic_DNA"/>
</dbReference>
<dbReference type="RefSeq" id="WP_006688965.1">
    <property type="nucleotide sequence ID" value="NC_002162.1"/>
</dbReference>
<dbReference type="SMR" id="Q9PQP8"/>
<dbReference type="STRING" id="273119.UU243"/>
<dbReference type="EnsemblBacteria" id="AAF30652">
    <property type="protein sequence ID" value="AAF30652"/>
    <property type="gene ID" value="UU243"/>
</dbReference>
<dbReference type="GeneID" id="29672530"/>
<dbReference type="KEGG" id="uur:UU243"/>
<dbReference type="eggNOG" id="COG0094">
    <property type="taxonomic scope" value="Bacteria"/>
</dbReference>
<dbReference type="HOGENOM" id="CLU_061015_2_1_14"/>
<dbReference type="OrthoDB" id="9806626at2"/>
<dbReference type="Proteomes" id="UP000000423">
    <property type="component" value="Chromosome"/>
</dbReference>
<dbReference type="GO" id="GO:1990904">
    <property type="term" value="C:ribonucleoprotein complex"/>
    <property type="evidence" value="ECO:0007669"/>
    <property type="project" value="UniProtKB-KW"/>
</dbReference>
<dbReference type="GO" id="GO:0005840">
    <property type="term" value="C:ribosome"/>
    <property type="evidence" value="ECO:0007669"/>
    <property type="project" value="UniProtKB-KW"/>
</dbReference>
<dbReference type="GO" id="GO:0019843">
    <property type="term" value="F:rRNA binding"/>
    <property type="evidence" value="ECO:0007669"/>
    <property type="project" value="UniProtKB-UniRule"/>
</dbReference>
<dbReference type="GO" id="GO:0003735">
    <property type="term" value="F:structural constituent of ribosome"/>
    <property type="evidence" value="ECO:0007669"/>
    <property type="project" value="InterPro"/>
</dbReference>
<dbReference type="GO" id="GO:0000049">
    <property type="term" value="F:tRNA binding"/>
    <property type="evidence" value="ECO:0007669"/>
    <property type="project" value="UniProtKB-UniRule"/>
</dbReference>
<dbReference type="GO" id="GO:0006412">
    <property type="term" value="P:translation"/>
    <property type="evidence" value="ECO:0007669"/>
    <property type="project" value="UniProtKB-UniRule"/>
</dbReference>
<dbReference type="FunFam" id="3.30.1440.10:FF:000001">
    <property type="entry name" value="50S ribosomal protein L5"/>
    <property type="match status" value="1"/>
</dbReference>
<dbReference type="Gene3D" id="3.30.1440.10">
    <property type="match status" value="1"/>
</dbReference>
<dbReference type="HAMAP" id="MF_01333_B">
    <property type="entry name" value="Ribosomal_uL5_B"/>
    <property type="match status" value="1"/>
</dbReference>
<dbReference type="InterPro" id="IPR002132">
    <property type="entry name" value="Ribosomal_uL5"/>
</dbReference>
<dbReference type="InterPro" id="IPR020930">
    <property type="entry name" value="Ribosomal_uL5_bac-type"/>
</dbReference>
<dbReference type="InterPro" id="IPR031309">
    <property type="entry name" value="Ribosomal_uL5_C"/>
</dbReference>
<dbReference type="InterPro" id="IPR020929">
    <property type="entry name" value="Ribosomal_uL5_CS"/>
</dbReference>
<dbReference type="InterPro" id="IPR022803">
    <property type="entry name" value="Ribosomal_uL5_dom_sf"/>
</dbReference>
<dbReference type="InterPro" id="IPR031310">
    <property type="entry name" value="Ribosomal_uL5_N"/>
</dbReference>
<dbReference type="NCBIfam" id="NF000585">
    <property type="entry name" value="PRK00010.1"/>
    <property type="match status" value="1"/>
</dbReference>
<dbReference type="PANTHER" id="PTHR11994">
    <property type="entry name" value="60S RIBOSOMAL PROTEIN L11-RELATED"/>
    <property type="match status" value="1"/>
</dbReference>
<dbReference type="Pfam" id="PF00281">
    <property type="entry name" value="Ribosomal_L5"/>
    <property type="match status" value="1"/>
</dbReference>
<dbReference type="Pfam" id="PF00673">
    <property type="entry name" value="Ribosomal_L5_C"/>
    <property type="match status" value="1"/>
</dbReference>
<dbReference type="PIRSF" id="PIRSF002161">
    <property type="entry name" value="Ribosomal_L5"/>
    <property type="match status" value="1"/>
</dbReference>
<dbReference type="SUPFAM" id="SSF55282">
    <property type="entry name" value="RL5-like"/>
    <property type="match status" value="1"/>
</dbReference>
<dbReference type="PROSITE" id="PS00358">
    <property type="entry name" value="RIBOSOMAL_L5"/>
    <property type="match status" value="1"/>
</dbReference>
<proteinExistence type="inferred from homology"/>
<protein>
    <recommendedName>
        <fullName evidence="1">Large ribosomal subunit protein uL5</fullName>
    </recommendedName>
    <alternativeName>
        <fullName evidence="2">50S ribosomal protein L5</fullName>
    </alternativeName>
</protein>